<reference key="1">
    <citation type="journal article" date="2005" name="Genome Biol.">
        <title>Full-length cDNAs from chicken bursal lymphocytes to facilitate gene function analysis.</title>
        <authorList>
            <person name="Caldwell R.B."/>
            <person name="Kierzek A.M."/>
            <person name="Arakawa H."/>
            <person name="Bezzubov Y."/>
            <person name="Zaim J."/>
            <person name="Fiedler P."/>
            <person name="Kutter S."/>
            <person name="Blagodatski A."/>
            <person name="Kostovska D."/>
            <person name="Koter M."/>
            <person name="Plachy J."/>
            <person name="Carninci P."/>
            <person name="Hayashizaki Y."/>
            <person name="Buerstedde J.-M."/>
        </authorList>
    </citation>
    <scope>NUCLEOTIDE SEQUENCE [LARGE SCALE MRNA]</scope>
    <source>
        <strain>CB</strain>
        <tissue>Bursa of Fabricius</tissue>
    </source>
</reference>
<keyword id="KW-0238">DNA-binding</keyword>
<keyword id="KW-0539">Nucleus</keyword>
<keyword id="KW-1185">Reference proteome</keyword>
<accession>Q5ZIR5</accession>
<protein>
    <recommendedName>
        <fullName>High mobility group nucleosome-binding domain-containing protein 3</fullName>
    </recommendedName>
</protein>
<dbReference type="EMBL" id="AJ720719">
    <property type="protein sequence ID" value="CAG32378.1"/>
    <property type="molecule type" value="mRNA"/>
</dbReference>
<dbReference type="RefSeq" id="NP_001006412.1">
    <property type="nucleotide sequence ID" value="NM_001006412.1"/>
</dbReference>
<dbReference type="FunCoup" id="Q5ZIR5">
    <property type="interactions" value="21"/>
</dbReference>
<dbReference type="STRING" id="9031.ENSGALP00000064716"/>
<dbReference type="PaxDb" id="9031-ENSGALP00000025549"/>
<dbReference type="Ensembl" id="ENSGALT00010008814.1">
    <property type="protein sequence ID" value="ENSGALP00010005158.1"/>
    <property type="gene ID" value="ENSGALG00010003810.1"/>
</dbReference>
<dbReference type="GeneID" id="421853"/>
<dbReference type="KEGG" id="gga:421853"/>
<dbReference type="CTD" id="283651"/>
<dbReference type="VEuPathDB" id="HostDB:geneid_421853"/>
<dbReference type="eggNOG" id="ENOG502S60V">
    <property type="taxonomic scope" value="Eukaryota"/>
</dbReference>
<dbReference type="GeneTree" id="ENSGT00950000182802"/>
<dbReference type="HOGENOM" id="CLU_141985_2_2_1"/>
<dbReference type="InParanoid" id="Q5ZIR5"/>
<dbReference type="OMA" id="QARTEIC"/>
<dbReference type="OrthoDB" id="8956258at2759"/>
<dbReference type="PhylomeDB" id="Q5ZIR5"/>
<dbReference type="PRO" id="PR:Q5ZIR5"/>
<dbReference type="Proteomes" id="UP000000539">
    <property type="component" value="Chromosome 3"/>
</dbReference>
<dbReference type="GO" id="GO:0000785">
    <property type="term" value="C:chromatin"/>
    <property type="evidence" value="ECO:0007669"/>
    <property type="project" value="InterPro"/>
</dbReference>
<dbReference type="GO" id="GO:0005634">
    <property type="term" value="C:nucleus"/>
    <property type="evidence" value="ECO:0000318"/>
    <property type="project" value="GO_Central"/>
</dbReference>
<dbReference type="GO" id="GO:0003682">
    <property type="term" value="F:chromatin binding"/>
    <property type="evidence" value="ECO:0000318"/>
    <property type="project" value="GO_Central"/>
</dbReference>
<dbReference type="GO" id="GO:0031492">
    <property type="term" value="F:nucleosomal DNA binding"/>
    <property type="evidence" value="ECO:0007669"/>
    <property type="project" value="InterPro"/>
</dbReference>
<dbReference type="GO" id="GO:0006325">
    <property type="term" value="P:chromatin organization"/>
    <property type="evidence" value="ECO:0000318"/>
    <property type="project" value="GO_Central"/>
</dbReference>
<dbReference type="InterPro" id="IPR000079">
    <property type="entry name" value="HMGN_fam"/>
</dbReference>
<dbReference type="PANTHER" id="PTHR23087:SF2">
    <property type="entry name" value="HIGH MOBILITY GROUP NUCLEOSOME-BINDING DOMAIN-CONTAINING PROTEIN 3"/>
    <property type="match status" value="1"/>
</dbReference>
<dbReference type="PANTHER" id="PTHR23087">
    <property type="entry name" value="NONHISTONE CHROMOSOMAL PROTEIN HMG"/>
    <property type="match status" value="1"/>
</dbReference>
<dbReference type="Pfam" id="PF01101">
    <property type="entry name" value="HMG14_17"/>
    <property type="match status" value="1"/>
</dbReference>
<dbReference type="PRINTS" id="PR00925">
    <property type="entry name" value="NONHISHMG17"/>
</dbReference>
<dbReference type="SMART" id="SM00527">
    <property type="entry name" value="HMG17"/>
    <property type="match status" value="1"/>
</dbReference>
<dbReference type="PROSITE" id="PS00355">
    <property type="entry name" value="HMG14_17"/>
    <property type="match status" value="1"/>
</dbReference>
<organism>
    <name type="scientific">Gallus gallus</name>
    <name type="common">Chicken</name>
    <dbReference type="NCBI Taxonomy" id="9031"/>
    <lineage>
        <taxon>Eukaryota</taxon>
        <taxon>Metazoa</taxon>
        <taxon>Chordata</taxon>
        <taxon>Craniata</taxon>
        <taxon>Vertebrata</taxon>
        <taxon>Euteleostomi</taxon>
        <taxon>Archelosauria</taxon>
        <taxon>Archosauria</taxon>
        <taxon>Dinosauria</taxon>
        <taxon>Saurischia</taxon>
        <taxon>Theropoda</taxon>
        <taxon>Coelurosauria</taxon>
        <taxon>Aves</taxon>
        <taxon>Neognathae</taxon>
        <taxon>Galloanserae</taxon>
        <taxon>Galliformes</taxon>
        <taxon>Phasianidae</taxon>
        <taxon>Phasianinae</taxon>
        <taxon>Gallus</taxon>
    </lineage>
</organism>
<feature type="chain" id="PRO_0000232578" description="High mobility group nucleosome-binding domain-containing protein 3">
    <location>
        <begin position="1"/>
        <end position="98"/>
    </location>
</feature>
<feature type="region of interest" description="Disordered" evidence="2">
    <location>
        <begin position="1"/>
        <end position="98"/>
    </location>
</feature>
<feature type="compositionally biased region" description="Basic and acidic residues" evidence="2">
    <location>
        <begin position="1"/>
        <end position="25"/>
    </location>
</feature>
<feature type="compositionally biased region" description="Basic and acidic residues" evidence="2">
    <location>
        <begin position="39"/>
        <end position="52"/>
    </location>
</feature>
<feature type="compositionally biased region" description="Basic and acidic residues" evidence="2">
    <location>
        <begin position="61"/>
        <end position="71"/>
    </location>
</feature>
<feature type="compositionally biased region" description="Basic and acidic residues" evidence="2">
    <location>
        <begin position="80"/>
        <end position="98"/>
    </location>
</feature>
<gene>
    <name type="primary">HMGN3</name>
    <name type="ORF">RCJMB04_24a7</name>
</gene>
<evidence type="ECO:0000250" key="1"/>
<evidence type="ECO:0000256" key="2">
    <source>
        <dbReference type="SAM" id="MobiDB-lite"/>
    </source>
</evidence>
<evidence type="ECO:0000305" key="3"/>
<proteinExistence type="inferred from homology"/>
<name>HMGN3_CHICK</name>
<comment type="subcellular location">
    <subcellularLocation>
        <location evidence="1">Nucleus</location>
    </subcellularLocation>
</comment>
<comment type="similarity">
    <text evidence="3">Belongs to the HMGN family.</text>
</comment>
<sequence>MPKRKSPEGAEGKDAAKVTKQEPTRRSARLSAKPAPPKPEPKPRKTTKKEPGTKANKGAKGKKDEKQEAAKEGTTPSENGENKAEEAQKTESVGDKNE</sequence>